<proteinExistence type="evidence at protein level"/>
<reference key="1">
    <citation type="journal article" date="1997" name="Microbiology">
        <title>A Bacillus subtilis chromosome segment at the 100 degrees to 102 degrees position encoding 11 membrane proteins.</title>
        <authorList>
            <person name="Roche B."/>
            <person name="Autret S."/>
            <person name="Levine A."/>
            <person name="Vannier F."/>
            <person name="Medina N."/>
            <person name="Seror S.J."/>
        </authorList>
    </citation>
    <scope>NUCLEOTIDE SEQUENCE [GENOMIC DNA]</scope>
    <source>
        <strain>168</strain>
    </source>
</reference>
<reference key="2">
    <citation type="submission" date="1997-04" db="EMBL/GenBank/DDBJ databases">
        <title>Bacillus subtilis genome project, DNA sequence from yucA to yucH.</title>
        <authorList>
            <person name="Oudega B."/>
            <person name="Koningstein G."/>
            <person name="Duesterhoeft A."/>
        </authorList>
    </citation>
    <scope>NUCLEOTIDE SEQUENCE [GENOMIC DNA]</scope>
    <source>
        <strain>168</strain>
    </source>
</reference>
<reference key="3">
    <citation type="journal article" date="1997" name="Nature">
        <title>The complete genome sequence of the Gram-positive bacterium Bacillus subtilis.</title>
        <authorList>
            <person name="Kunst F."/>
            <person name="Ogasawara N."/>
            <person name="Moszer I."/>
            <person name="Albertini A.M."/>
            <person name="Alloni G."/>
            <person name="Azevedo V."/>
            <person name="Bertero M.G."/>
            <person name="Bessieres P."/>
            <person name="Bolotin A."/>
            <person name="Borchert S."/>
            <person name="Borriss R."/>
            <person name="Boursier L."/>
            <person name="Brans A."/>
            <person name="Braun M."/>
            <person name="Brignell S.C."/>
            <person name="Bron S."/>
            <person name="Brouillet S."/>
            <person name="Bruschi C.V."/>
            <person name="Caldwell B."/>
            <person name="Capuano V."/>
            <person name="Carter N.M."/>
            <person name="Choi S.-K."/>
            <person name="Codani J.-J."/>
            <person name="Connerton I.F."/>
            <person name="Cummings N.J."/>
            <person name="Daniel R.A."/>
            <person name="Denizot F."/>
            <person name="Devine K.M."/>
            <person name="Duesterhoeft A."/>
            <person name="Ehrlich S.D."/>
            <person name="Emmerson P.T."/>
            <person name="Entian K.-D."/>
            <person name="Errington J."/>
            <person name="Fabret C."/>
            <person name="Ferrari E."/>
            <person name="Foulger D."/>
            <person name="Fritz C."/>
            <person name="Fujita M."/>
            <person name="Fujita Y."/>
            <person name="Fuma S."/>
            <person name="Galizzi A."/>
            <person name="Galleron N."/>
            <person name="Ghim S.-Y."/>
            <person name="Glaser P."/>
            <person name="Goffeau A."/>
            <person name="Golightly E.J."/>
            <person name="Grandi G."/>
            <person name="Guiseppi G."/>
            <person name="Guy B.J."/>
            <person name="Haga K."/>
            <person name="Haiech J."/>
            <person name="Harwood C.R."/>
            <person name="Henaut A."/>
            <person name="Hilbert H."/>
            <person name="Holsappel S."/>
            <person name="Hosono S."/>
            <person name="Hullo M.-F."/>
            <person name="Itaya M."/>
            <person name="Jones L.-M."/>
            <person name="Joris B."/>
            <person name="Karamata D."/>
            <person name="Kasahara Y."/>
            <person name="Klaerr-Blanchard M."/>
            <person name="Klein C."/>
            <person name="Kobayashi Y."/>
            <person name="Koetter P."/>
            <person name="Koningstein G."/>
            <person name="Krogh S."/>
            <person name="Kumano M."/>
            <person name="Kurita K."/>
            <person name="Lapidus A."/>
            <person name="Lardinois S."/>
            <person name="Lauber J."/>
            <person name="Lazarevic V."/>
            <person name="Lee S.-M."/>
            <person name="Levine A."/>
            <person name="Liu H."/>
            <person name="Masuda S."/>
            <person name="Mauel C."/>
            <person name="Medigue C."/>
            <person name="Medina N."/>
            <person name="Mellado R.P."/>
            <person name="Mizuno M."/>
            <person name="Moestl D."/>
            <person name="Nakai S."/>
            <person name="Noback M."/>
            <person name="Noone D."/>
            <person name="O'Reilly M."/>
            <person name="Ogawa K."/>
            <person name="Ogiwara A."/>
            <person name="Oudega B."/>
            <person name="Park S.-H."/>
            <person name="Parro V."/>
            <person name="Pohl T.M."/>
            <person name="Portetelle D."/>
            <person name="Porwollik S."/>
            <person name="Prescott A.M."/>
            <person name="Presecan E."/>
            <person name="Pujic P."/>
            <person name="Purnelle B."/>
            <person name="Rapoport G."/>
            <person name="Rey M."/>
            <person name="Reynolds S."/>
            <person name="Rieger M."/>
            <person name="Rivolta C."/>
            <person name="Rocha E."/>
            <person name="Roche B."/>
            <person name="Rose M."/>
            <person name="Sadaie Y."/>
            <person name="Sato T."/>
            <person name="Scanlan E."/>
            <person name="Schleich S."/>
            <person name="Schroeter R."/>
            <person name="Scoffone F."/>
            <person name="Sekiguchi J."/>
            <person name="Sekowska A."/>
            <person name="Seror S.J."/>
            <person name="Serror P."/>
            <person name="Shin B.-S."/>
            <person name="Soldo B."/>
            <person name="Sorokin A."/>
            <person name="Tacconi E."/>
            <person name="Takagi T."/>
            <person name="Takahashi H."/>
            <person name="Takemaru K."/>
            <person name="Takeuchi M."/>
            <person name="Tamakoshi A."/>
            <person name="Tanaka T."/>
            <person name="Terpstra P."/>
            <person name="Tognoni A."/>
            <person name="Tosato V."/>
            <person name="Uchiyama S."/>
            <person name="Vandenbol M."/>
            <person name="Vannier F."/>
            <person name="Vassarotti A."/>
            <person name="Viari A."/>
            <person name="Wambutt R."/>
            <person name="Wedler E."/>
            <person name="Wedler H."/>
            <person name="Weitzenegger T."/>
            <person name="Winters P."/>
            <person name="Wipat A."/>
            <person name="Yamamoto H."/>
            <person name="Yamane K."/>
            <person name="Yasumoto K."/>
            <person name="Yata K."/>
            <person name="Yoshida K."/>
            <person name="Yoshikawa H.-F."/>
            <person name="Zumstein E."/>
            <person name="Yoshikawa H."/>
            <person name="Danchin A."/>
        </authorList>
    </citation>
    <scope>NUCLEOTIDE SEQUENCE [LARGE SCALE GENOMIC DNA]</scope>
    <source>
        <strain>168</strain>
    </source>
</reference>
<reference key="4">
    <citation type="journal article" date="2010" name="Genes Dev.">
        <title>Functional microdomains in bacterial membranes.</title>
        <authorList>
            <person name="Lopez D."/>
            <person name="Kolter R."/>
        </authorList>
    </citation>
    <scope>FUNCTION</scope>
    <scope>ACTIVITY REGULATION</scope>
    <scope>BIOPHYSICOCHEMICAL PROPERTIES</scope>
    <scope>DISRUPTION PHENOTYPE</scope>
    <source>
        <strain>168 / Marburg / ATCC 6051 / DSM 10 / JCM 1465 / NBRC 13719 / NCIMB 3610 / NRRL NRS-744 / VKM B-501</strain>
    </source>
</reference>
<reference key="5">
    <citation type="journal article" date="2013" name="Mol. Microbiol.">
        <title>Flotillins functionally organize the bacterial membrane.</title>
        <authorList>
            <person name="Bach J.N."/>
            <person name="Bramkamp M."/>
        </authorList>
    </citation>
    <scope>FUNCTION</scope>
    <scope>DISRUPTION PHENOTYPE</scope>
    <source>
        <strain>168</strain>
    </source>
</reference>
<reference evidence="5" key="6">
    <citation type="journal article" date="2014" name="Chem. Biol.">
        <title>Structural and functional analysis of Bacillus subtilis YisP reveals a role of its product in biofilm production.</title>
        <authorList>
            <person name="Feng X."/>
            <person name="Hu Y."/>
            <person name="Zheng Y."/>
            <person name="Zhu W."/>
            <person name="Li K."/>
            <person name="Huang C.H."/>
            <person name="Ko T.P."/>
            <person name="Ren F."/>
            <person name="Chan H.C."/>
            <person name="Nega M."/>
            <person name="Bogue S."/>
            <person name="Lopez D."/>
            <person name="Kolter R."/>
            <person name="Goetz F."/>
            <person name="Guo R.T."/>
            <person name="Oldfield E."/>
        </authorList>
    </citation>
    <scope>X-RAY CRYSTALLOGRAPHY (1.92 ANGSTROMS)</scope>
    <scope>FUNCTION</scope>
    <scope>CATALYTIC ACTIVITY</scope>
    <scope>SUBUNIT</scope>
    <scope>DISRUPTION PHENOTYPE</scope>
    <scope>MUTAGENESIS OF 47-ALA-ALA-48; ALA-47; ASP-51; ASP-160 AND ASP-164</scope>
    <source>
        <strain>168</strain>
    </source>
</reference>
<name>YISP_BACSU</name>
<protein>
    <recommendedName>
        <fullName evidence="4">Farnesyl diphosphate phosphatase YisP</fullName>
        <ecNumber evidence="3">3.1.7.6</ecNumber>
    </recommendedName>
</protein>
<comment type="function">
    <text evidence="1 2 3">A farnesyl diphosphate (FPP) phosphatase. Involved in biofilm formation, its disruption blocks biofilm synthesis which is restored by exogenous farnesol (PubMed:25308276). Releases diphosphate from FPP, was initally suggested to be a squalene synthase. Diphosphate release is higher from FPP than geranyl pyrophosphate (GPP) or geranylgeranyl pyrophosphate (GGPP). Biofilm synthesis is partially restored by exogenous squalene, beta-carotene or retinol. Required for integrity of cell membrane lipid rafts (PubMed:20713508). Involved in spatial organization of membranes, required for the flotillin-like proteins FloT and FloA to function correctly (PubMed:23651456).</text>
</comment>
<comment type="catalytic activity">
    <reaction evidence="3">
        <text>(2E,6E)-farnesyl diphosphate + H2O = (2E,6E)-farnesol + diphosphate</text>
        <dbReference type="Rhea" id="RHEA:27526"/>
        <dbReference type="ChEBI" id="CHEBI:15377"/>
        <dbReference type="ChEBI" id="CHEBI:16619"/>
        <dbReference type="ChEBI" id="CHEBI:33019"/>
        <dbReference type="ChEBI" id="CHEBI:175763"/>
        <dbReference type="EC" id="3.1.7.6"/>
    </reaction>
</comment>
<comment type="activity regulation">
    <text evidence="1">Diphosphate release from FPP is inhibited by zaragozic acid.</text>
</comment>
<comment type="biophysicochemical properties">
    <kinetics>
        <KM evidence="1">4.47 uM for farnesyl pyrophosphate</KM>
        <KM evidence="1">14.9 uM for geranyl pyrophosphate</KM>
    </kinetics>
</comment>
<comment type="subunit">
    <text evidence="3">Monomer.</text>
</comment>
<comment type="disruption phenotype">
    <text evidence="1 2 3">Loss of biofilm formation (PubMed:20713508, PubMed:25308276). Loss of a dark-orange pigment from cells, alteration of cellular lipid profile. Significant reduction of proteins found in detergent-resistant membrane (DRM) fractions (PubMed:20713508). Decrease in membrane fluidity, about 30% decrease in protein secretion (PubMed:23651456).</text>
</comment>
<comment type="similarity">
    <text evidence="4">Belongs to the phytoene/squalene synthase family.</text>
</comment>
<comment type="caution">
    <text evidence="1 3">Was originally thought to be a squalene synthase (PubMed:20713508). Further characterization suggests it is actually a farnesyl diphosphate phosphatase (PubMed:25308276).</text>
</comment>
<comment type="sequence caution" evidence="4">
    <conflict type="erroneous initiation">
        <sequence resource="EMBL-CDS" id="CAA70644"/>
    </conflict>
    <text>Extended N-terminus.</text>
</comment>
<comment type="sequence caution" evidence="4">
    <conflict type="erroneous initiation">
        <sequence resource="EMBL-CDS" id="CAB12920"/>
    </conflict>
    <text>Extended N-terminus.</text>
</comment>
<feature type="chain" id="PRO_0000388332" description="Farnesyl diphosphate phosphatase YisP">
    <location>
        <begin position="1"/>
        <end position="267"/>
    </location>
</feature>
<feature type="mutagenesis site" description="Greater than wild-type diphosphate release." evidence="3">
    <original>AA</original>
    <variation>DD</variation>
    <location>
        <begin position="47"/>
        <end position="48"/>
    </location>
</feature>
<feature type="mutagenesis site" description="Wild-type diphosphate release." evidence="3">
    <original>A</original>
    <variation>D</variation>
    <location>
        <position position="47"/>
    </location>
</feature>
<feature type="mutagenesis site" description="Loss of diphosphate release." evidence="3">
    <original>D</original>
    <variation>A</variation>
    <location>
        <position position="51"/>
    </location>
</feature>
<feature type="mutagenesis site" description="Loss of diphosphate release." evidence="3">
    <original>D</original>
    <variation>A</variation>
    <location>
        <position position="160"/>
    </location>
</feature>
<feature type="mutagenesis site" description="Loss of diphosphate release." evidence="3">
    <original>D</original>
    <variation>A</variation>
    <location>
        <position position="164"/>
    </location>
</feature>
<feature type="helix" evidence="6">
    <location>
        <begin position="1"/>
        <end position="18"/>
    </location>
</feature>
<feature type="helix" evidence="6">
    <location>
        <begin position="20"/>
        <end position="26"/>
    </location>
</feature>
<feature type="helix" evidence="6">
    <location>
        <begin position="31"/>
        <end position="47"/>
    </location>
</feature>
<feature type="helix" evidence="6">
    <location>
        <begin position="77"/>
        <end position="87"/>
    </location>
</feature>
<feature type="helix" evidence="6">
    <location>
        <begin position="91"/>
        <end position="100"/>
    </location>
</feature>
<feature type="helix" evidence="6">
    <location>
        <begin position="111"/>
        <end position="133"/>
    </location>
</feature>
<feature type="helix" evidence="6">
    <location>
        <begin position="138"/>
        <end position="158"/>
    </location>
</feature>
<feature type="helix" evidence="6">
    <location>
        <begin position="164"/>
        <end position="167"/>
    </location>
</feature>
<feature type="helix" evidence="6">
    <location>
        <begin position="172"/>
        <end position="178"/>
    </location>
</feature>
<feature type="helix" evidence="6">
    <location>
        <begin position="182"/>
        <end position="187"/>
    </location>
</feature>
<feature type="helix" evidence="6">
    <location>
        <begin position="192"/>
        <end position="214"/>
    </location>
</feature>
<feature type="helix" evidence="6">
    <location>
        <begin position="216"/>
        <end position="218"/>
    </location>
</feature>
<feature type="helix" evidence="6">
    <location>
        <begin position="221"/>
        <end position="243"/>
    </location>
</feature>
<feature type="turn" evidence="6">
    <location>
        <begin position="244"/>
        <end position="246"/>
    </location>
</feature>
<feature type="turn" evidence="6">
    <location>
        <begin position="248"/>
        <end position="250"/>
    </location>
</feature>
<feature type="helix" evidence="6">
    <location>
        <begin position="257"/>
        <end position="264"/>
    </location>
</feature>
<sequence length="267" mass="30621">MKEIKEAYQQCGQIVGEYAPACFKALSYLPLKQRQASWAVLSFCHTAASADEKVLPAFEAKADHVYQRTNNGKQHLWKAFDHAYRTFTLESEPFREFIAAQKEDAKPYDDLDELLMYAYRTGGAAGLMLLPILTRRKQDQLKQAAVSLGLAIQLVRFLSDLGTDQQKNRIPRQVMQQFGYTEADLQKGTVNKAFTMTWEYIAFEAEAYLEECQDALPLFPQYSQKTVKAALHLHRAVLEKIRAKQHDVFQYHFALTETEVKQILSDI</sequence>
<evidence type="ECO:0000269" key="1">
    <source>
    </source>
</evidence>
<evidence type="ECO:0000269" key="2">
    <source>
    </source>
</evidence>
<evidence type="ECO:0000269" key="3">
    <source>
    </source>
</evidence>
<evidence type="ECO:0000305" key="4"/>
<evidence type="ECO:0007744" key="5">
    <source>
        <dbReference type="PDB" id="3WE9"/>
    </source>
</evidence>
<evidence type="ECO:0007829" key="6">
    <source>
        <dbReference type="PDB" id="3WE9"/>
    </source>
</evidence>
<gene>
    <name type="primary">yisP</name>
    <name type="synonym">yucD</name>
    <name type="ordered locus">BSU10810</name>
</gene>
<keyword id="KW-0002">3D-structure</keyword>
<keyword id="KW-0378">Hydrolase</keyword>
<keyword id="KW-1185">Reference proteome</keyword>
<organism>
    <name type="scientific">Bacillus subtilis (strain 168)</name>
    <dbReference type="NCBI Taxonomy" id="224308"/>
    <lineage>
        <taxon>Bacteria</taxon>
        <taxon>Bacillati</taxon>
        <taxon>Bacillota</taxon>
        <taxon>Bacilli</taxon>
        <taxon>Bacillales</taxon>
        <taxon>Bacillaceae</taxon>
        <taxon>Bacillus</taxon>
    </lineage>
</organism>
<dbReference type="EC" id="3.1.7.6" evidence="3"/>
<dbReference type="EMBL" id="Y09476">
    <property type="protein sequence ID" value="CAA70644.1"/>
    <property type="status" value="ALT_INIT"/>
    <property type="molecule type" value="Genomic_DNA"/>
</dbReference>
<dbReference type="EMBL" id="Z93940">
    <property type="protein sequence ID" value="CAB07958.1"/>
    <property type="molecule type" value="Genomic_DNA"/>
</dbReference>
<dbReference type="EMBL" id="AL009126">
    <property type="protein sequence ID" value="CAB12920.1"/>
    <property type="status" value="ALT_INIT"/>
    <property type="molecule type" value="Genomic_DNA"/>
</dbReference>
<dbReference type="PIR" id="G69837">
    <property type="entry name" value="G69837"/>
</dbReference>
<dbReference type="PDB" id="3WE9">
    <property type="method" value="X-ray"/>
    <property type="resolution" value="1.92 A"/>
    <property type="chains" value="A=1-267"/>
</dbReference>
<dbReference type="PDBsum" id="3WE9"/>
<dbReference type="SMR" id="O06728"/>
<dbReference type="FunCoup" id="O06728">
    <property type="interactions" value="107"/>
</dbReference>
<dbReference type="STRING" id="224308.BSU10810"/>
<dbReference type="PaxDb" id="224308-BSU10810"/>
<dbReference type="DNASU" id="936353"/>
<dbReference type="EnsemblBacteria" id="CAB12920">
    <property type="protein sequence ID" value="CAB12920"/>
    <property type="gene ID" value="BSU_10810"/>
</dbReference>
<dbReference type="GeneID" id="936353"/>
<dbReference type="KEGG" id="bsu:BSU10810"/>
<dbReference type="PATRIC" id="fig|224308.179.peg.1162"/>
<dbReference type="eggNOG" id="COG1562">
    <property type="taxonomic scope" value="Bacteria"/>
</dbReference>
<dbReference type="InParanoid" id="O06728"/>
<dbReference type="OrthoDB" id="9787280at2"/>
<dbReference type="BioCyc" id="BSUB:BSU10810-MONOMER"/>
<dbReference type="EvolutionaryTrace" id="O06728"/>
<dbReference type="Proteomes" id="UP000001570">
    <property type="component" value="Chromosome"/>
</dbReference>
<dbReference type="GO" id="GO:0046905">
    <property type="term" value="F:15-cis-phytoene synthase activity"/>
    <property type="evidence" value="ECO:0000318"/>
    <property type="project" value="GO_Central"/>
</dbReference>
<dbReference type="GO" id="GO:0016787">
    <property type="term" value="F:hydrolase activity"/>
    <property type="evidence" value="ECO:0007669"/>
    <property type="project" value="UniProtKB-KW"/>
</dbReference>
<dbReference type="Gene3D" id="1.10.600.10">
    <property type="entry name" value="Farnesyl Diphosphate Synthase"/>
    <property type="match status" value="1"/>
</dbReference>
<dbReference type="InterPro" id="IPR008949">
    <property type="entry name" value="Isoprenoid_synthase_dom_sf"/>
</dbReference>
<dbReference type="InterPro" id="IPR002060">
    <property type="entry name" value="Squ/phyt_synthse"/>
</dbReference>
<dbReference type="PANTHER" id="PTHR31480">
    <property type="entry name" value="BIFUNCTIONAL LYCOPENE CYCLASE/PHYTOENE SYNTHASE"/>
    <property type="match status" value="1"/>
</dbReference>
<dbReference type="Pfam" id="PF00494">
    <property type="entry name" value="SQS_PSY"/>
    <property type="match status" value="1"/>
</dbReference>
<dbReference type="SUPFAM" id="SSF48576">
    <property type="entry name" value="Terpenoid synthases"/>
    <property type="match status" value="1"/>
</dbReference>
<accession>O06728</accession>
<accession>Q796Q9</accession>
<accession>Q798I6</accession>